<protein>
    <recommendedName>
        <fullName evidence="1">Small ribosomal subunit protein uS11</fullName>
    </recommendedName>
    <alternativeName>
        <fullName evidence="2">30S ribosomal protein S11</fullName>
    </alternativeName>
</protein>
<name>RS11_AGRFC</name>
<reference key="1">
    <citation type="journal article" date="2001" name="Science">
        <title>The genome of the natural genetic engineer Agrobacterium tumefaciens C58.</title>
        <authorList>
            <person name="Wood D.W."/>
            <person name="Setubal J.C."/>
            <person name="Kaul R."/>
            <person name="Monks D.E."/>
            <person name="Kitajima J.P."/>
            <person name="Okura V.K."/>
            <person name="Zhou Y."/>
            <person name="Chen L."/>
            <person name="Wood G.E."/>
            <person name="Almeida N.F. Jr."/>
            <person name="Woo L."/>
            <person name="Chen Y."/>
            <person name="Paulsen I.T."/>
            <person name="Eisen J.A."/>
            <person name="Karp P.D."/>
            <person name="Bovee D. Sr."/>
            <person name="Chapman P."/>
            <person name="Clendenning J."/>
            <person name="Deatherage G."/>
            <person name="Gillet W."/>
            <person name="Grant C."/>
            <person name="Kutyavin T."/>
            <person name="Levy R."/>
            <person name="Li M.-J."/>
            <person name="McClelland E."/>
            <person name="Palmieri A."/>
            <person name="Raymond C."/>
            <person name="Rouse G."/>
            <person name="Saenphimmachak C."/>
            <person name="Wu Z."/>
            <person name="Romero P."/>
            <person name="Gordon D."/>
            <person name="Zhang S."/>
            <person name="Yoo H."/>
            <person name="Tao Y."/>
            <person name="Biddle P."/>
            <person name="Jung M."/>
            <person name="Krespan W."/>
            <person name="Perry M."/>
            <person name="Gordon-Kamm B."/>
            <person name="Liao L."/>
            <person name="Kim S."/>
            <person name="Hendrick C."/>
            <person name="Zhao Z.-Y."/>
            <person name="Dolan M."/>
            <person name="Chumley F."/>
            <person name="Tingey S.V."/>
            <person name="Tomb J.-F."/>
            <person name="Gordon M.P."/>
            <person name="Olson M.V."/>
            <person name="Nester E.W."/>
        </authorList>
    </citation>
    <scope>NUCLEOTIDE SEQUENCE [LARGE SCALE GENOMIC DNA]</scope>
    <source>
        <strain>C58 / ATCC 33970</strain>
    </source>
</reference>
<reference key="2">
    <citation type="journal article" date="2001" name="Science">
        <title>Genome sequence of the plant pathogen and biotechnology agent Agrobacterium tumefaciens C58.</title>
        <authorList>
            <person name="Goodner B."/>
            <person name="Hinkle G."/>
            <person name="Gattung S."/>
            <person name="Miller N."/>
            <person name="Blanchard M."/>
            <person name="Qurollo B."/>
            <person name="Goldman B.S."/>
            <person name="Cao Y."/>
            <person name="Askenazi M."/>
            <person name="Halling C."/>
            <person name="Mullin L."/>
            <person name="Houmiel K."/>
            <person name="Gordon J."/>
            <person name="Vaudin M."/>
            <person name="Iartchouk O."/>
            <person name="Epp A."/>
            <person name="Liu F."/>
            <person name="Wollam C."/>
            <person name="Allinger M."/>
            <person name="Doughty D."/>
            <person name="Scott C."/>
            <person name="Lappas C."/>
            <person name="Markelz B."/>
            <person name="Flanagan C."/>
            <person name="Crowell C."/>
            <person name="Gurson J."/>
            <person name="Lomo C."/>
            <person name="Sear C."/>
            <person name="Strub G."/>
            <person name="Cielo C."/>
            <person name="Slater S."/>
        </authorList>
    </citation>
    <scope>NUCLEOTIDE SEQUENCE [LARGE SCALE GENOMIC DNA]</scope>
    <source>
        <strain>C58 / ATCC 33970</strain>
    </source>
</reference>
<feature type="chain" id="PRO_0000123093" description="Small ribosomal subunit protein uS11">
    <location>
        <begin position="1"/>
        <end position="129"/>
    </location>
</feature>
<accession>Q8UE40</accession>
<dbReference type="EMBL" id="AE007869">
    <property type="protein sequence ID" value="AAK87685.1"/>
    <property type="molecule type" value="Genomic_DNA"/>
</dbReference>
<dbReference type="PIR" id="AB2813">
    <property type="entry name" value="AB2813"/>
</dbReference>
<dbReference type="PIR" id="D97591">
    <property type="entry name" value="D97591"/>
</dbReference>
<dbReference type="RefSeq" id="NP_354900.1">
    <property type="nucleotide sequence ID" value="NC_003062.2"/>
</dbReference>
<dbReference type="RefSeq" id="WP_003495225.1">
    <property type="nucleotide sequence ID" value="NC_003062.2"/>
</dbReference>
<dbReference type="SMR" id="Q8UE40"/>
<dbReference type="STRING" id="176299.Atu1924"/>
<dbReference type="EnsemblBacteria" id="AAK87685">
    <property type="protein sequence ID" value="AAK87685"/>
    <property type="gene ID" value="Atu1924"/>
</dbReference>
<dbReference type="GeneID" id="97364670"/>
<dbReference type="KEGG" id="atu:Atu1924"/>
<dbReference type="PATRIC" id="fig|176299.10.peg.1935"/>
<dbReference type="eggNOG" id="COG0100">
    <property type="taxonomic scope" value="Bacteria"/>
</dbReference>
<dbReference type="HOGENOM" id="CLU_072439_5_0_5"/>
<dbReference type="OrthoDB" id="9806415at2"/>
<dbReference type="PhylomeDB" id="Q8UE40"/>
<dbReference type="BioCyc" id="AGRO:ATU1924-MONOMER"/>
<dbReference type="PRO" id="PR:Q8UE40"/>
<dbReference type="Proteomes" id="UP000000813">
    <property type="component" value="Chromosome circular"/>
</dbReference>
<dbReference type="GO" id="GO:1990904">
    <property type="term" value="C:ribonucleoprotein complex"/>
    <property type="evidence" value="ECO:0007669"/>
    <property type="project" value="UniProtKB-KW"/>
</dbReference>
<dbReference type="GO" id="GO:0005840">
    <property type="term" value="C:ribosome"/>
    <property type="evidence" value="ECO:0007669"/>
    <property type="project" value="UniProtKB-KW"/>
</dbReference>
<dbReference type="GO" id="GO:0019843">
    <property type="term" value="F:rRNA binding"/>
    <property type="evidence" value="ECO:0007669"/>
    <property type="project" value="UniProtKB-UniRule"/>
</dbReference>
<dbReference type="GO" id="GO:0003735">
    <property type="term" value="F:structural constituent of ribosome"/>
    <property type="evidence" value="ECO:0007669"/>
    <property type="project" value="InterPro"/>
</dbReference>
<dbReference type="GO" id="GO:0006412">
    <property type="term" value="P:translation"/>
    <property type="evidence" value="ECO:0007669"/>
    <property type="project" value="UniProtKB-UniRule"/>
</dbReference>
<dbReference type="FunFam" id="3.30.420.80:FF:000001">
    <property type="entry name" value="30S ribosomal protein S11"/>
    <property type="match status" value="1"/>
</dbReference>
<dbReference type="Gene3D" id="3.30.420.80">
    <property type="entry name" value="Ribosomal protein S11"/>
    <property type="match status" value="1"/>
</dbReference>
<dbReference type="HAMAP" id="MF_01310">
    <property type="entry name" value="Ribosomal_uS11"/>
    <property type="match status" value="1"/>
</dbReference>
<dbReference type="InterPro" id="IPR001971">
    <property type="entry name" value="Ribosomal_uS11"/>
</dbReference>
<dbReference type="InterPro" id="IPR019981">
    <property type="entry name" value="Ribosomal_uS11_bac-type"/>
</dbReference>
<dbReference type="InterPro" id="IPR018102">
    <property type="entry name" value="Ribosomal_uS11_CS"/>
</dbReference>
<dbReference type="InterPro" id="IPR036967">
    <property type="entry name" value="Ribosomal_uS11_sf"/>
</dbReference>
<dbReference type="NCBIfam" id="NF003698">
    <property type="entry name" value="PRK05309.1"/>
    <property type="match status" value="1"/>
</dbReference>
<dbReference type="NCBIfam" id="TIGR03632">
    <property type="entry name" value="uS11_bact"/>
    <property type="match status" value="1"/>
</dbReference>
<dbReference type="PANTHER" id="PTHR11759">
    <property type="entry name" value="40S RIBOSOMAL PROTEIN S14/30S RIBOSOMAL PROTEIN S11"/>
    <property type="match status" value="1"/>
</dbReference>
<dbReference type="Pfam" id="PF00411">
    <property type="entry name" value="Ribosomal_S11"/>
    <property type="match status" value="1"/>
</dbReference>
<dbReference type="PIRSF" id="PIRSF002131">
    <property type="entry name" value="Ribosomal_S11"/>
    <property type="match status" value="1"/>
</dbReference>
<dbReference type="SUPFAM" id="SSF53137">
    <property type="entry name" value="Translational machinery components"/>
    <property type="match status" value="1"/>
</dbReference>
<dbReference type="PROSITE" id="PS00054">
    <property type="entry name" value="RIBOSOMAL_S11"/>
    <property type="match status" value="1"/>
</dbReference>
<evidence type="ECO:0000255" key="1">
    <source>
        <dbReference type="HAMAP-Rule" id="MF_01310"/>
    </source>
</evidence>
<evidence type="ECO:0000305" key="2"/>
<sequence length="129" mass="13879">MAKEAARVRRRERKNITSGVAHVNSTFNNTMITITDAQGNAIAWSSAGAKGFKGSRKSTPFAAQIAAEDCAKKAQEHGMKSLEVEVCGPGSGRESALRALQAAGFMITSIRDVTPIPHNGCRPRKKRRV</sequence>
<gene>
    <name evidence="1" type="primary">rpsK</name>
    <name type="ordered locus">Atu1924</name>
    <name type="ORF">AGR_C_3519</name>
</gene>
<keyword id="KW-1185">Reference proteome</keyword>
<keyword id="KW-0687">Ribonucleoprotein</keyword>
<keyword id="KW-0689">Ribosomal protein</keyword>
<keyword id="KW-0694">RNA-binding</keyword>
<keyword id="KW-0699">rRNA-binding</keyword>
<organism>
    <name type="scientific">Agrobacterium fabrum (strain C58 / ATCC 33970)</name>
    <name type="common">Agrobacterium tumefaciens (strain C58)</name>
    <dbReference type="NCBI Taxonomy" id="176299"/>
    <lineage>
        <taxon>Bacteria</taxon>
        <taxon>Pseudomonadati</taxon>
        <taxon>Pseudomonadota</taxon>
        <taxon>Alphaproteobacteria</taxon>
        <taxon>Hyphomicrobiales</taxon>
        <taxon>Rhizobiaceae</taxon>
        <taxon>Rhizobium/Agrobacterium group</taxon>
        <taxon>Agrobacterium</taxon>
        <taxon>Agrobacterium tumefaciens complex</taxon>
    </lineage>
</organism>
<proteinExistence type="inferred from homology"/>
<comment type="function">
    <text evidence="1">Located on the platform of the 30S subunit, it bridges several disparate RNA helices of the 16S rRNA. Forms part of the Shine-Dalgarno cleft in the 70S ribosome.</text>
</comment>
<comment type="subunit">
    <text evidence="1">Part of the 30S ribosomal subunit. Interacts with proteins S7 and S18. Binds to IF-3.</text>
</comment>
<comment type="similarity">
    <text evidence="1">Belongs to the universal ribosomal protein uS11 family.</text>
</comment>